<reference key="1">
    <citation type="journal article" date="2010" name="BMC Genomics">
        <title>A genomic perspective on the potential of Actinobacillus succinogenes for industrial succinate production.</title>
        <authorList>
            <person name="McKinlay J.B."/>
            <person name="Laivenieks M."/>
            <person name="Schindler B.D."/>
            <person name="McKinlay A.A."/>
            <person name="Siddaramappa S."/>
            <person name="Challacombe J.F."/>
            <person name="Lowry S.R."/>
            <person name="Clum A."/>
            <person name="Lapidus A.L."/>
            <person name="Burkhart K.B."/>
            <person name="Harkins V."/>
            <person name="Vieille C."/>
        </authorList>
    </citation>
    <scope>NUCLEOTIDE SEQUENCE [LARGE SCALE GENOMIC DNA]</scope>
    <source>
        <strain>ATCC 55618 / DSM 22257 / CCUG 43843 / 130Z</strain>
    </source>
</reference>
<keyword id="KW-0998">Cell outer membrane</keyword>
<keyword id="KW-0961">Cell wall biogenesis/degradation</keyword>
<keyword id="KW-0456">Lyase</keyword>
<keyword id="KW-0472">Membrane</keyword>
<keyword id="KW-1185">Reference proteome</keyword>
<keyword id="KW-0732">Signal</keyword>
<proteinExistence type="inferred from homology"/>
<gene>
    <name evidence="1" type="primary">mltF</name>
    <name type="ordered locus">Asuc_0762</name>
</gene>
<accession>A6VMD7</accession>
<comment type="function">
    <text evidence="1">Murein-degrading enzyme that degrades murein glycan strands and insoluble, high-molecular weight murein sacculi, with the concomitant formation of a 1,6-anhydromuramoyl product. Lytic transglycosylases (LTs) play an integral role in the metabolism of the peptidoglycan (PG) sacculus. Their lytic action creates space within the PG sacculus to allow for its expansion as well as for the insertion of various structures such as secretion systems and flagella.</text>
</comment>
<comment type="catalytic activity">
    <reaction evidence="1">
        <text>Exolytic cleavage of the (1-&gt;4)-beta-glycosidic linkage between N-acetylmuramic acid (MurNAc) and N-acetylglucosamine (GlcNAc) residues in peptidoglycan, from either the reducing or the non-reducing ends of the peptidoglycan chains, with concomitant formation of a 1,6-anhydrobond in the MurNAc residue.</text>
        <dbReference type="EC" id="4.2.2.n1"/>
    </reaction>
</comment>
<comment type="subcellular location">
    <subcellularLocation>
        <location>Cell outer membrane</location>
        <topology>Peripheral membrane protein</topology>
    </subcellularLocation>
    <text evidence="1">Attached to the inner leaflet of the outer membrane.</text>
</comment>
<comment type="domain">
    <text evidence="1">The N-terminal domain does not have lytic activity and probably modulates enzymatic activity. The C-terminal domain is the catalytic active domain.</text>
</comment>
<comment type="similarity">
    <text evidence="1">In the N-terminal section; belongs to the bacterial solute-binding protein 3 family.</text>
</comment>
<comment type="similarity">
    <text evidence="1">In the C-terminal section; belongs to the transglycosylase Slt family.</text>
</comment>
<sequence>MKGLVIRISVALALLLWAVDMVFPWQQIIRSEANHYEAIQERGTLVVGTINNSVSYFIDPNGNPAGLEYDLSKSFADYLGVELEIKSLDNSDALFDALQNNKIDIAAANLLHQQRYQKQFQFGPAYTSASWQLVYRKGKDKPRSLTQLSAKDKLVITQSEELLNILSAQQKKQPTLSWQINSLLSQEALLLQVAEGKIDYTIANSIDVSAAQQIKPEIAVAFDITDEADVHWYLPSSSYSELQAALLDFMNGAIENGLIARIEEKYFSHIAQFDYVDIKSYTNAIEKILPKYTALFKKYQGELDWRLLAAVAYQESHWNEDATSPTGVRGIMMLTKATADRMKINDRTDAEQSIKAGSEYLHWLISQVPNSVPQEDKIWYALTAYNMGLGHMLDVRRLTKSLGGDPDNWLEVKKNLPLLAEKQYYSKLKYGYARGYEAFQYVENIRRYMNSIINYHRVRDDQISRPLEKVTDSIMITPQNSQD</sequence>
<evidence type="ECO:0000255" key="1">
    <source>
        <dbReference type="HAMAP-Rule" id="MF_02016"/>
    </source>
</evidence>
<feature type="signal peptide" evidence="1">
    <location>
        <begin position="1"/>
        <end position="18"/>
    </location>
</feature>
<feature type="chain" id="PRO_0000353916" description="Membrane-bound lytic murein transglycosylase F">
    <location>
        <begin position="19"/>
        <end position="483"/>
    </location>
</feature>
<feature type="region of interest" description="Non-LT domain" evidence="1">
    <location>
        <begin position="19"/>
        <end position="270"/>
    </location>
</feature>
<feature type="region of interest" description="LT domain" evidence="1">
    <location>
        <begin position="272"/>
        <end position="483"/>
    </location>
</feature>
<feature type="active site" evidence="1">
    <location>
        <position position="315"/>
    </location>
</feature>
<protein>
    <recommendedName>
        <fullName evidence="1">Membrane-bound lytic murein transglycosylase F</fullName>
        <ecNumber evidence="1">4.2.2.n1</ecNumber>
    </recommendedName>
    <alternativeName>
        <fullName evidence="1">Murein lyase F</fullName>
    </alternativeName>
</protein>
<dbReference type="EC" id="4.2.2.n1" evidence="1"/>
<dbReference type="EMBL" id="CP000746">
    <property type="protein sequence ID" value="ABR74134.1"/>
    <property type="molecule type" value="Genomic_DNA"/>
</dbReference>
<dbReference type="RefSeq" id="WP_012072512.1">
    <property type="nucleotide sequence ID" value="NC_009655.1"/>
</dbReference>
<dbReference type="SMR" id="A6VMD7"/>
<dbReference type="STRING" id="339671.Asuc_0762"/>
<dbReference type="CAZy" id="GH23">
    <property type="family name" value="Glycoside Hydrolase Family 23"/>
</dbReference>
<dbReference type="KEGG" id="asu:Asuc_0762"/>
<dbReference type="eggNOG" id="COG4623">
    <property type="taxonomic scope" value="Bacteria"/>
</dbReference>
<dbReference type="HOGENOM" id="CLU_027494_0_1_6"/>
<dbReference type="OrthoDB" id="9815002at2"/>
<dbReference type="Proteomes" id="UP000001114">
    <property type="component" value="Chromosome"/>
</dbReference>
<dbReference type="GO" id="GO:0009279">
    <property type="term" value="C:cell outer membrane"/>
    <property type="evidence" value="ECO:0007669"/>
    <property type="project" value="UniProtKB-SubCell"/>
</dbReference>
<dbReference type="GO" id="GO:0008933">
    <property type="term" value="F:peptidoglycan lytic transglycosylase activity"/>
    <property type="evidence" value="ECO:0007669"/>
    <property type="project" value="UniProtKB-UniRule"/>
</dbReference>
<dbReference type="GO" id="GO:0016998">
    <property type="term" value="P:cell wall macromolecule catabolic process"/>
    <property type="evidence" value="ECO:0007669"/>
    <property type="project" value="UniProtKB-UniRule"/>
</dbReference>
<dbReference type="GO" id="GO:0071555">
    <property type="term" value="P:cell wall organization"/>
    <property type="evidence" value="ECO:0007669"/>
    <property type="project" value="UniProtKB-KW"/>
</dbReference>
<dbReference type="GO" id="GO:0009253">
    <property type="term" value="P:peptidoglycan catabolic process"/>
    <property type="evidence" value="ECO:0007669"/>
    <property type="project" value="TreeGrafter"/>
</dbReference>
<dbReference type="CDD" id="cd13403">
    <property type="entry name" value="MLTF-like"/>
    <property type="match status" value="1"/>
</dbReference>
<dbReference type="CDD" id="cd01009">
    <property type="entry name" value="PBP2_YfhD_N"/>
    <property type="match status" value="1"/>
</dbReference>
<dbReference type="Gene3D" id="1.10.530.10">
    <property type="match status" value="1"/>
</dbReference>
<dbReference type="Gene3D" id="3.40.190.10">
    <property type="entry name" value="Periplasmic binding protein-like II"/>
    <property type="match status" value="2"/>
</dbReference>
<dbReference type="HAMAP" id="MF_02016">
    <property type="entry name" value="MltF"/>
    <property type="match status" value="1"/>
</dbReference>
<dbReference type="InterPro" id="IPR023346">
    <property type="entry name" value="Lysozyme-like_dom_sf"/>
</dbReference>
<dbReference type="InterPro" id="IPR023703">
    <property type="entry name" value="MltF"/>
</dbReference>
<dbReference type="InterPro" id="IPR001638">
    <property type="entry name" value="Solute-binding_3/MltF_N"/>
</dbReference>
<dbReference type="InterPro" id="IPR008258">
    <property type="entry name" value="Transglycosylase_SLT_dom_1"/>
</dbReference>
<dbReference type="NCBIfam" id="NF008112">
    <property type="entry name" value="PRK10859.1"/>
    <property type="match status" value="1"/>
</dbReference>
<dbReference type="PANTHER" id="PTHR35936">
    <property type="entry name" value="MEMBRANE-BOUND LYTIC MUREIN TRANSGLYCOSYLASE F"/>
    <property type="match status" value="1"/>
</dbReference>
<dbReference type="PANTHER" id="PTHR35936:SF32">
    <property type="entry name" value="MEMBRANE-BOUND LYTIC MUREIN TRANSGLYCOSYLASE F"/>
    <property type="match status" value="1"/>
</dbReference>
<dbReference type="Pfam" id="PF00497">
    <property type="entry name" value="SBP_bac_3"/>
    <property type="match status" value="1"/>
</dbReference>
<dbReference type="Pfam" id="PF01464">
    <property type="entry name" value="SLT"/>
    <property type="match status" value="1"/>
</dbReference>
<dbReference type="SMART" id="SM00062">
    <property type="entry name" value="PBPb"/>
    <property type="match status" value="1"/>
</dbReference>
<dbReference type="SUPFAM" id="SSF53955">
    <property type="entry name" value="Lysozyme-like"/>
    <property type="match status" value="1"/>
</dbReference>
<dbReference type="SUPFAM" id="SSF53850">
    <property type="entry name" value="Periplasmic binding protein-like II"/>
    <property type="match status" value="1"/>
</dbReference>
<name>MLTF_ACTSZ</name>
<organism>
    <name type="scientific">Actinobacillus succinogenes (strain ATCC 55618 / DSM 22257 / CCUG 43843 / 130Z)</name>
    <dbReference type="NCBI Taxonomy" id="339671"/>
    <lineage>
        <taxon>Bacteria</taxon>
        <taxon>Pseudomonadati</taxon>
        <taxon>Pseudomonadota</taxon>
        <taxon>Gammaproteobacteria</taxon>
        <taxon>Pasteurellales</taxon>
        <taxon>Pasteurellaceae</taxon>
        <taxon>Actinobacillus</taxon>
    </lineage>
</organism>